<gene>
    <name type="ordered locus">SPD_0987</name>
</gene>
<accession>Q04KI6</accession>
<proteinExistence type="inferred from homology"/>
<organism>
    <name type="scientific">Streptococcus pneumoniae serotype 2 (strain D39 / NCTC 7466)</name>
    <dbReference type="NCBI Taxonomy" id="373153"/>
    <lineage>
        <taxon>Bacteria</taxon>
        <taxon>Bacillati</taxon>
        <taxon>Bacillota</taxon>
        <taxon>Bacilli</taxon>
        <taxon>Lactobacillales</taxon>
        <taxon>Streptococcaceae</taxon>
        <taxon>Streptococcus</taxon>
    </lineage>
</organism>
<comment type="function">
    <text evidence="1">Binds to DNA and alters its conformation. May be involved in regulation of gene expression, nucleoid organization and DNA protection.</text>
</comment>
<comment type="subunit">
    <text evidence="1">Homodimer.</text>
</comment>
<comment type="subcellular location">
    <subcellularLocation>
        <location evidence="1">Cytoplasm</location>
        <location evidence="1">Nucleoid</location>
    </subcellularLocation>
</comment>
<comment type="similarity">
    <text evidence="1">Belongs to the YbaB/EbfC family.</text>
</comment>
<protein>
    <recommendedName>
        <fullName evidence="1">Nucleoid-associated protein SPD_0987</fullName>
    </recommendedName>
</protein>
<name>Y987_STRP2</name>
<sequence>MMNMQNMMRQAQKLQKQMEQSQAELAAMQFVGKSAQDLVQATLTGDKKVVSIDFNPAVVDPEDLETLSDMTVQAINSALEQIDETTKKKLGAFAGKLPF</sequence>
<reference key="1">
    <citation type="journal article" date="2007" name="J. Bacteriol.">
        <title>Genome sequence of Avery's virulent serotype 2 strain D39 of Streptococcus pneumoniae and comparison with that of unencapsulated laboratory strain R6.</title>
        <authorList>
            <person name="Lanie J.A."/>
            <person name="Ng W.-L."/>
            <person name="Kazmierczak K.M."/>
            <person name="Andrzejewski T.M."/>
            <person name="Davidsen T.M."/>
            <person name="Wayne K.J."/>
            <person name="Tettelin H."/>
            <person name="Glass J.I."/>
            <person name="Winkler M.E."/>
        </authorList>
    </citation>
    <scope>NUCLEOTIDE SEQUENCE [LARGE SCALE GENOMIC DNA]</scope>
    <source>
        <strain>D39 / NCTC 7466</strain>
    </source>
</reference>
<feature type="chain" id="PRO_1000003837" description="Nucleoid-associated protein SPD_0987">
    <location>
        <begin position="1"/>
        <end position="99"/>
    </location>
</feature>
<evidence type="ECO:0000255" key="1">
    <source>
        <dbReference type="HAMAP-Rule" id="MF_00274"/>
    </source>
</evidence>
<dbReference type="EMBL" id="CP000410">
    <property type="protein sequence ID" value="ABJ54907.1"/>
    <property type="molecule type" value="Genomic_DNA"/>
</dbReference>
<dbReference type="RefSeq" id="WP_000981526.1">
    <property type="nucleotide sequence ID" value="NZ_JAMLJR010000014.1"/>
</dbReference>
<dbReference type="SMR" id="Q04KI6"/>
<dbReference type="PaxDb" id="373153-SPD_0987"/>
<dbReference type="KEGG" id="spd:SPD_0987"/>
<dbReference type="eggNOG" id="COG0718">
    <property type="taxonomic scope" value="Bacteria"/>
</dbReference>
<dbReference type="HOGENOM" id="CLU_140930_1_1_9"/>
<dbReference type="BioCyc" id="SPNE373153:G1G6V-1078-MONOMER"/>
<dbReference type="Proteomes" id="UP000001452">
    <property type="component" value="Chromosome"/>
</dbReference>
<dbReference type="GO" id="GO:0043590">
    <property type="term" value="C:bacterial nucleoid"/>
    <property type="evidence" value="ECO:0007669"/>
    <property type="project" value="UniProtKB-UniRule"/>
</dbReference>
<dbReference type="GO" id="GO:0005829">
    <property type="term" value="C:cytosol"/>
    <property type="evidence" value="ECO:0007669"/>
    <property type="project" value="TreeGrafter"/>
</dbReference>
<dbReference type="GO" id="GO:0003677">
    <property type="term" value="F:DNA binding"/>
    <property type="evidence" value="ECO:0007669"/>
    <property type="project" value="UniProtKB-UniRule"/>
</dbReference>
<dbReference type="FunFam" id="3.30.1310.10:FF:000005">
    <property type="entry name" value="Nucleoid-associated protein SPAR113_1167"/>
    <property type="match status" value="1"/>
</dbReference>
<dbReference type="Gene3D" id="3.30.1310.10">
    <property type="entry name" value="Nucleoid-associated protein YbaB-like domain"/>
    <property type="match status" value="1"/>
</dbReference>
<dbReference type="HAMAP" id="MF_00274">
    <property type="entry name" value="DNA_YbaB_EbfC"/>
    <property type="match status" value="1"/>
</dbReference>
<dbReference type="InterPro" id="IPR036894">
    <property type="entry name" value="YbaB-like_sf"/>
</dbReference>
<dbReference type="InterPro" id="IPR004401">
    <property type="entry name" value="YbaB/EbfC"/>
</dbReference>
<dbReference type="NCBIfam" id="TIGR00103">
    <property type="entry name" value="DNA_YbaB_EbfC"/>
    <property type="match status" value="1"/>
</dbReference>
<dbReference type="PANTHER" id="PTHR33449">
    <property type="entry name" value="NUCLEOID-ASSOCIATED PROTEIN YBAB"/>
    <property type="match status" value="1"/>
</dbReference>
<dbReference type="PANTHER" id="PTHR33449:SF1">
    <property type="entry name" value="NUCLEOID-ASSOCIATED PROTEIN YBAB"/>
    <property type="match status" value="1"/>
</dbReference>
<dbReference type="Pfam" id="PF02575">
    <property type="entry name" value="YbaB_DNA_bd"/>
    <property type="match status" value="1"/>
</dbReference>
<dbReference type="PIRSF" id="PIRSF004555">
    <property type="entry name" value="UCP004555"/>
    <property type="match status" value="1"/>
</dbReference>
<dbReference type="SUPFAM" id="SSF82607">
    <property type="entry name" value="YbaB-like"/>
    <property type="match status" value="1"/>
</dbReference>
<keyword id="KW-0963">Cytoplasm</keyword>
<keyword id="KW-0238">DNA-binding</keyword>
<keyword id="KW-1185">Reference proteome</keyword>